<gene>
    <name evidence="2" type="primary">BROX</name>
</gene>
<organism>
    <name type="scientific">Pongo abelii</name>
    <name type="common">Sumatran orangutan</name>
    <name type="synonym">Pongo pygmaeus abelii</name>
    <dbReference type="NCBI Taxonomy" id="9601"/>
    <lineage>
        <taxon>Eukaryota</taxon>
        <taxon>Metazoa</taxon>
        <taxon>Chordata</taxon>
        <taxon>Craniata</taxon>
        <taxon>Vertebrata</taxon>
        <taxon>Euteleostomi</taxon>
        <taxon>Mammalia</taxon>
        <taxon>Eutheria</taxon>
        <taxon>Euarchontoglires</taxon>
        <taxon>Primates</taxon>
        <taxon>Haplorrhini</taxon>
        <taxon>Catarrhini</taxon>
        <taxon>Hominidae</taxon>
        <taxon>Pongo</taxon>
    </lineage>
</organism>
<evidence type="ECO:0000250" key="1"/>
<evidence type="ECO:0000250" key="2">
    <source>
        <dbReference type="UniProtKB" id="Q5VW32"/>
    </source>
</evidence>
<evidence type="ECO:0000255" key="3">
    <source>
        <dbReference type="PROSITE-ProRule" id="PRU00526"/>
    </source>
</evidence>
<evidence type="ECO:0000256" key="4">
    <source>
        <dbReference type="SAM" id="MobiDB-lite"/>
    </source>
</evidence>
<evidence type="ECO:0000305" key="5"/>
<dbReference type="EMBL" id="CR857976">
    <property type="protein sequence ID" value="CAH90220.1"/>
    <property type="molecule type" value="mRNA"/>
</dbReference>
<dbReference type="RefSeq" id="NP_001125088.1">
    <property type="nucleotide sequence ID" value="NM_001131616.1"/>
</dbReference>
<dbReference type="SMR" id="Q5RDD7"/>
<dbReference type="FunCoup" id="Q5RDD7">
    <property type="interactions" value="2167"/>
</dbReference>
<dbReference type="STRING" id="9601.ENSPPYP00000000197"/>
<dbReference type="Ensembl" id="ENSPPYT00000000212.2">
    <property type="protein sequence ID" value="ENSPPYP00000000197.2"/>
    <property type="gene ID" value="ENSPPYG00000000195.3"/>
</dbReference>
<dbReference type="GeneID" id="100171970"/>
<dbReference type="KEGG" id="pon:100171970"/>
<dbReference type="CTD" id="148362"/>
<dbReference type="eggNOG" id="ENOG502QQBR">
    <property type="taxonomic scope" value="Eukaryota"/>
</dbReference>
<dbReference type="GeneTree" id="ENSGT00390000006681"/>
<dbReference type="HOGENOM" id="CLU_056561_0_0_1"/>
<dbReference type="InParanoid" id="Q5RDD7"/>
<dbReference type="OMA" id="YNYCGEN"/>
<dbReference type="OrthoDB" id="10266451at2759"/>
<dbReference type="Proteomes" id="UP000001595">
    <property type="component" value="Chromosome 1"/>
</dbReference>
<dbReference type="GO" id="GO:0005635">
    <property type="term" value="C:nuclear envelope"/>
    <property type="evidence" value="ECO:0000250"/>
    <property type="project" value="UniProtKB"/>
</dbReference>
<dbReference type="GO" id="GO:0031965">
    <property type="term" value="C:nuclear membrane"/>
    <property type="evidence" value="ECO:0007669"/>
    <property type="project" value="UniProtKB-SubCell"/>
</dbReference>
<dbReference type="GO" id="GO:0007084">
    <property type="term" value="P:mitotic nuclear membrane reassembly"/>
    <property type="evidence" value="ECO:0000250"/>
    <property type="project" value="UniProtKB"/>
</dbReference>
<dbReference type="CDD" id="cd09243">
    <property type="entry name" value="BRO1_Brox_like"/>
    <property type="match status" value="1"/>
</dbReference>
<dbReference type="FunFam" id="1.25.40.280:FF:000004">
    <property type="entry name" value="BRO1 domain-containing protein BROX"/>
    <property type="match status" value="1"/>
</dbReference>
<dbReference type="Gene3D" id="1.25.40.280">
    <property type="entry name" value="alix/aip1 like domains"/>
    <property type="match status" value="1"/>
</dbReference>
<dbReference type="InterPro" id="IPR004328">
    <property type="entry name" value="BRO1_dom"/>
</dbReference>
<dbReference type="InterPro" id="IPR038499">
    <property type="entry name" value="BRO1_sf"/>
</dbReference>
<dbReference type="InterPro" id="IPR038898">
    <property type="entry name" value="BROX"/>
</dbReference>
<dbReference type="PANTHER" id="PTHR23032">
    <property type="entry name" value="BRO1 DOMAIN-CONTAINING PROTEIN BROX"/>
    <property type="match status" value="1"/>
</dbReference>
<dbReference type="PANTHER" id="PTHR23032:SF13">
    <property type="entry name" value="BRO1 DOMAIN-CONTAINING PROTEIN BROX"/>
    <property type="match status" value="1"/>
</dbReference>
<dbReference type="Pfam" id="PF03097">
    <property type="entry name" value="BRO1"/>
    <property type="match status" value="1"/>
</dbReference>
<dbReference type="SMART" id="SM01041">
    <property type="entry name" value="BRO1"/>
    <property type="match status" value="1"/>
</dbReference>
<dbReference type="PROSITE" id="PS51180">
    <property type="entry name" value="BRO1"/>
    <property type="match status" value="1"/>
</dbReference>
<reference key="1">
    <citation type="submission" date="2004-11" db="EMBL/GenBank/DDBJ databases">
        <authorList>
            <consortium name="The German cDNA consortium"/>
        </authorList>
    </citation>
    <scope>NUCLEOTIDE SEQUENCE [LARGE SCALE MRNA]</scope>
    <source>
        <tissue>Kidney</tissue>
    </source>
</reference>
<comment type="function">
    <text evidence="2">Nuclear envelope-associated factor that is involved in the nuclear envelope ruptures during interphase (NERDI) repair, where it is locally recruited by CHMP5 and reduces cytoskeletal stress through its action on SYN2 to help reseal the ruptured membrane.</text>
</comment>
<comment type="subunit">
    <text evidence="2">Monomer. Interacts with CHMP4B. Interacts with CHMP5: this interaction allows the recruitment of BROX to cellular membranes. Interacts with SYN2; this interaction promotes SYN2 ubiquitination and facilitates the relaxation of mechanical stress imposed by compressive actin fibers at the rupture site.</text>
</comment>
<comment type="subcellular location">
    <subcellularLocation>
        <location evidence="2">Nucleus membrane</location>
        <topology evidence="2">Lipid-anchor</topology>
    </subcellularLocation>
    <text evidence="2">During nuclear envelope repair, localizes at rupture sites where it is recruited by the CHMP7/ESCRT-III axis.</text>
</comment>
<comment type="PTM">
    <text evidence="2">Farnesylation is required for nuclear envelope localization.</text>
</comment>
<comment type="similarity">
    <text evidence="5">Belongs to the BROX family.</text>
</comment>
<feature type="chain" id="PRO_0000304614" description="BRO1 domain-containing protein BROX">
    <location>
        <begin position="1"/>
        <end position="408"/>
    </location>
</feature>
<feature type="propeptide" id="PRO_0000396738" description="Removed in mature form" evidence="1">
    <location>
        <begin position="409"/>
        <end position="411"/>
    </location>
</feature>
<feature type="domain" description="BRO1" evidence="3">
    <location>
        <begin position="90"/>
        <end position="408"/>
    </location>
</feature>
<feature type="region of interest" description="Disordered" evidence="4">
    <location>
        <begin position="374"/>
        <end position="411"/>
    </location>
</feature>
<feature type="compositionally biased region" description="Basic and acidic residues" evidence="4">
    <location>
        <begin position="375"/>
        <end position="404"/>
    </location>
</feature>
<feature type="modified residue" description="N6-acetyllysine" evidence="2">
    <location>
        <position position="283"/>
    </location>
</feature>
<feature type="modified residue" description="Cysteine methyl ester" evidence="1">
    <location>
        <position position="408"/>
    </location>
</feature>
<feature type="lipid moiety-binding region" description="S-farnesyl cysteine" evidence="1">
    <location>
        <position position="408"/>
    </location>
</feature>
<sequence length="411" mass="46422">MTHWFHRNPLKATAPVSFNYYGVVTGPSASKICNDLRSSRARLLELFTDLSCNPEMMKNAADSYFSLLQGFINSLDESTQESKLRYIQNFKWTDTLQGQVPSAQQDAVFELISMGFNVALWHTKYASRLAGKENITEDEAKEVHRSLKIAAGIFKHLKESHIPKLITPAEKGRDLESRLIEAYVIQCQAEAQEVTIARAIELKHAPGLIAALAYETANFYQKADHTLSSLEPAYSAKWRKYLHLKMCFYTAYAYCYHGETLLASDKCGEAIRSLQEAEKLYAKAEALCKEYGETKGPGPTVKPSGHLFFRKLGNLVKNTLEKCQRENGFIYFQKIPTEAPQLELKANYGLVEPIPFEFPPTSAQWTPETLAAFDLTKRPKDDSTKPKPEEEVKPVKEPDIKPQKDTGCYIS</sequence>
<proteinExistence type="evidence at transcript level"/>
<keyword id="KW-0007">Acetylation</keyword>
<keyword id="KW-0449">Lipoprotein</keyword>
<keyword id="KW-0472">Membrane</keyword>
<keyword id="KW-0488">Methylation</keyword>
<keyword id="KW-0539">Nucleus</keyword>
<keyword id="KW-0636">Prenylation</keyword>
<keyword id="KW-1185">Reference proteome</keyword>
<accession>Q5RDD7</accession>
<protein>
    <recommendedName>
        <fullName evidence="2">BRO1 domain-containing protein BROX</fullName>
    </recommendedName>
    <alternativeName>
        <fullName>BRO1 domain- and CAAX motif-containing protein</fullName>
    </alternativeName>
</protein>
<name>BROX_PONAB</name>